<reference key="1">
    <citation type="journal article" date="2007" name="J. Bacteriol.">
        <title>Complete genome sequence of Haemophilus somnus (Histophilus somni) strain 129Pt and comparison to Haemophilus ducreyi 35000HP and Haemophilus influenzae Rd.</title>
        <authorList>
            <person name="Challacombe J.F."/>
            <person name="Duncan A.J."/>
            <person name="Brettin T.S."/>
            <person name="Bruce D."/>
            <person name="Chertkov O."/>
            <person name="Detter J.C."/>
            <person name="Han C.S."/>
            <person name="Misra M."/>
            <person name="Richardson P."/>
            <person name="Tapia R."/>
            <person name="Thayer N."/>
            <person name="Xie G."/>
            <person name="Inzana T.J."/>
        </authorList>
    </citation>
    <scope>NUCLEOTIDE SEQUENCE [LARGE SCALE GENOMIC DNA]</scope>
    <source>
        <strain>129Pt</strain>
    </source>
</reference>
<protein>
    <recommendedName>
        <fullName evidence="1">Glycogen synthase</fullName>
        <ecNumber evidence="1">2.4.1.21</ecNumber>
    </recommendedName>
    <alternativeName>
        <fullName evidence="1">Starch [bacterial glycogen] synthase</fullName>
    </alternativeName>
</protein>
<gene>
    <name evidence="1" type="primary">glgA</name>
    <name type="ordered locus">HS_0886</name>
</gene>
<feature type="chain" id="PRO_1000014364" description="Glycogen synthase">
    <location>
        <begin position="1"/>
        <end position="479"/>
    </location>
</feature>
<feature type="binding site" evidence="1">
    <location>
        <position position="15"/>
    </location>
    <ligand>
        <name>ADP-alpha-D-glucose</name>
        <dbReference type="ChEBI" id="CHEBI:57498"/>
    </ligand>
</feature>
<comment type="function">
    <text evidence="1">Synthesizes alpha-1,4-glucan chains using ADP-glucose.</text>
</comment>
<comment type="catalytic activity">
    <reaction evidence="1">
        <text>[(1-&gt;4)-alpha-D-glucosyl](n) + ADP-alpha-D-glucose = [(1-&gt;4)-alpha-D-glucosyl](n+1) + ADP + H(+)</text>
        <dbReference type="Rhea" id="RHEA:18189"/>
        <dbReference type="Rhea" id="RHEA-COMP:9584"/>
        <dbReference type="Rhea" id="RHEA-COMP:9587"/>
        <dbReference type="ChEBI" id="CHEBI:15378"/>
        <dbReference type="ChEBI" id="CHEBI:15444"/>
        <dbReference type="ChEBI" id="CHEBI:57498"/>
        <dbReference type="ChEBI" id="CHEBI:456216"/>
        <dbReference type="EC" id="2.4.1.21"/>
    </reaction>
</comment>
<comment type="pathway">
    <text evidence="1">Glycan biosynthesis; glycogen biosynthesis.</text>
</comment>
<comment type="similarity">
    <text evidence="1">Belongs to the glycosyltransferase 1 family. Bacterial/plant glycogen synthase subfamily.</text>
</comment>
<keyword id="KW-0320">Glycogen biosynthesis</keyword>
<keyword id="KW-0328">Glycosyltransferase</keyword>
<keyword id="KW-0808">Transferase</keyword>
<accession>Q0I3I0</accession>
<organism>
    <name type="scientific">Histophilus somni (strain 129Pt)</name>
    <name type="common">Haemophilus somnus</name>
    <dbReference type="NCBI Taxonomy" id="205914"/>
    <lineage>
        <taxon>Bacteria</taxon>
        <taxon>Pseudomonadati</taxon>
        <taxon>Pseudomonadota</taxon>
        <taxon>Gammaproteobacteria</taxon>
        <taxon>Pasteurellales</taxon>
        <taxon>Pasteurellaceae</taxon>
        <taxon>Histophilus</taxon>
    </lineage>
</organism>
<sequence length="479" mass="53446">MKVLHVCSELYPLLKTGGLADVMGALPFAQNEIGIDARLVLPAYPAISRGIPNTVVVAEFNNFAGHVVLRYGEYNGIGVYLIDAPHLYAREGNPYHDMWYNDYTDNYKRFALLAWVGAELATGLDFWWRAEIVHAHDWHAGLTAAYLHHKGRPAKSVFTIHNLAYQGRFLPYHLTEIGLPWWMFNVDGLELYGEMSYLKAGLYYSDISTAVSPTYAKEITTPEFAYGLQGLLQTLKAQGRLVGILNGVDEKIWHPYSDPYIEDHYKLKSMQGKRKNKIKLQAYFNLPQNPNALLFVMVTRLTEQKGVDLLIGSAERIVQQGGQLAILGSGSAHLEAGINWLAQEYPENIAVKIGYDEALSHLMIAGGDVILVPSRFEPCGLTQLYGLKYGTLPLVRSTGGLADTVIDSSSENIKARHATGFVFNDADVGGLCYGIDSAFTLWRKPSQWESVIVNAMEQDFSWQTSAKGYQSLYDILLHK</sequence>
<name>GLGA_HISS1</name>
<proteinExistence type="inferred from homology"/>
<dbReference type="EC" id="2.4.1.21" evidence="1"/>
<dbReference type="EMBL" id="CP000436">
    <property type="protein sequence ID" value="ABI25161.1"/>
    <property type="molecule type" value="Genomic_DNA"/>
</dbReference>
<dbReference type="SMR" id="Q0I3I0"/>
<dbReference type="CAZy" id="GT5">
    <property type="family name" value="Glycosyltransferase Family 5"/>
</dbReference>
<dbReference type="KEGG" id="hso:HS_0886"/>
<dbReference type="eggNOG" id="COG0297">
    <property type="taxonomic scope" value="Bacteria"/>
</dbReference>
<dbReference type="HOGENOM" id="CLU_009583_18_4_6"/>
<dbReference type="UniPathway" id="UPA00164"/>
<dbReference type="GO" id="GO:0005829">
    <property type="term" value="C:cytosol"/>
    <property type="evidence" value="ECO:0007669"/>
    <property type="project" value="TreeGrafter"/>
</dbReference>
<dbReference type="GO" id="GO:0009011">
    <property type="term" value="F:alpha-1,4-glucan glucosyltransferase (ADP-glucose donor) activity"/>
    <property type="evidence" value="ECO:0007669"/>
    <property type="project" value="UniProtKB-UniRule"/>
</dbReference>
<dbReference type="GO" id="GO:0004373">
    <property type="term" value="F:alpha-1,4-glucan glucosyltransferase (UDP-glucose donor) activity"/>
    <property type="evidence" value="ECO:0007669"/>
    <property type="project" value="InterPro"/>
</dbReference>
<dbReference type="GO" id="GO:0005978">
    <property type="term" value="P:glycogen biosynthetic process"/>
    <property type="evidence" value="ECO:0007669"/>
    <property type="project" value="UniProtKB-UniRule"/>
</dbReference>
<dbReference type="CDD" id="cd03791">
    <property type="entry name" value="GT5_Glycogen_synthase_DULL1-like"/>
    <property type="match status" value="1"/>
</dbReference>
<dbReference type="FunFam" id="3.40.50.2000:FF:000011">
    <property type="entry name" value="Glycogen synthase"/>
    <property type="match status" value="1"/>
</dbReference>
<dbReference type="Gene3D" id="3.40.50.2000">
    <property type="entry name" value="Glycogen Phosphorylase B"/>
    <property type="match status" value="2"/>
</dbReference>
<dbReference type="HAMAP" id="MF_00484">
    <property type="entry name" value="Glycogen_synth"/>
    <property type="match status" value="1"/>
</dbReference>
<dbReference type="InterPro" id="IPR001296">
    <property type="entry name" value="Glyco_trans_1"/>
</dbReference>
<dbReference type="InterPro" id="IPR011835">
    <property type="entry name" value="GS/SS"/>
</dbReference>
<dbReference type="InterPro" id="IPR013534">
    <property type="entry name" value="Starch_synth_cat_dom"/>
</dbReference>
<dbReference type="NCBIfam" id="TIGR02095">
    <property type="entry name" value="glgA"/>
    <property type="match status" value="1"/>
</dbReference>
<dbReference type="NCBIfam" id="NF001899">
    <property type="entry name" value="PRK00654.1-2"/>
    <property type="match status" value="1"/>
</dbReference>
<dbReference type="PANTHER" id="PTHR45825:SF11">
    <property type="entry name" value="ALPHA AMYLASE DOMAIN-CONTAINING PROTEIN"/>
    <property type="match status" value="1"/>
</dbReference>
<dbReference type="PANTHER" id="PTHR45825">
    <property type="entry name" value="GRANULE-BOUND STARCH SYNTHASE 1, CHLOROPLASTIC/AMYLOPLASTIC"/>
    <property type="match status" value="1"/>
</dbReference>
<dbReference type="Pfam" id="PF08323">
    <property type="entry name" value="Glyco_transf_5"/>
    <property type="match status" value="1"/>
</dbReference>
<dbReference type="Pfam" id="PF00534">
    <property type="entry name" value="Glycos_transf_1"/>
    <property type="match status" value="1"/>
</dbReference>
<dbReference type="SUPFAM" id="SSF53756">
    <property type="entry name" value="UDP-Glycosyltransferase/glycogen phosphorylase"/>
    <property type="match status" value="1"/>
</dbReference>
<evidence type="ECO:0000255" key="1">
    <source>
        <dbReference type="HAMAP-Rule" id="MF_00484"/>
    </source>
</evidence>